<accession>A7GHS2</accession>
<proteinExistence type="inferred from homology"/>
<reference key="1">
    <citation type="submission" date="2007-06" db="EMBL/GenBank/DDBJ databases">
        <authorList>
            <person name="Brinkac L.M."/>
            <person name="Daugherty S."/>
            <person name="Dodson R.J."/>
            <person name="Madupu R."/>
            <person name="Brown J.L."/>
            <person name="Bruce D."/>
            <person name="Detter C."/>
            <person name="Munk C."/>
            <person name="Smith L.A."/>
            <person name="Smith T.J."/>
            <person name="White O."/>
            <person name="Brettin T.S."/>
        </authorList>
    </citation>
    <scope>NUCLEOTIDE SEQUENCE [LARGE SCALE GENOMIC DNA]</scope>
    <source>
        <strain>Langeland / NCTC 10281 / Type F</strain>
    </source>
</reference>
<feature type="chain" id="PRO_1000006663" description="Aspartate--tRNA ligase">
    <location>
        <begin position="1"/>
        <end position="593"/>
    </location>
</feature>
<feature type="region of interest" description="Aspartate" evidence="1">
    <location>
        <begin position="204"/>
        <end position="207"/>
    </location>
</feature>
<feature type="binding site" evidence="1">
    <location>
        <position position="180"/>
    </location>
    <ligand>
        <name>L-aspartate</name>
        <dbReference type="ChEBI" id="CHEBI:29991"/>
    </ligand>
</feature>
<feature type="binding site" evidence="1">
    <location>
        <begin position="226"/>
        <end position="228"/>
    </location>
    <ligand>
        <name>ATP</name>
        <dbReference type="ChEBI" id="CHEBI:30616"/>
    </ligand>
</feature>
<feature type="binding site" evidence="1">
    <location>
        <position position="226"/>
    </location>
    <ligand>
        <name>L-aspartate</name>
        <dbReference type="ChEBI" id="CHEBI:29991"/>
    </ligand>
</feature>
<feature type="binding site" evidence="1">
    <location>
        <position position="235"/>
    </location>
    <ligand>
        <name>ATP</name>
        <dbReference type="ChEBI" id="CHEBI:30616"/>
    </ligand>
</feature>
<feature type="binding site" evidence="1">
    <location>
        <position position="453"/>
    </location>
    <ligand>
        <name>L-aspartate</name>
        <dbReference type="ChEBI" id="CHEBI:29991"/>
    </ligand>
</feature>
<feature type="binding site" evidence="1">
    <location>
        <position position="487"/>
    </location>
    <ligand>
        <name>ATP</name>
        <dbReference type="ChEBI" id="CHEBI:30616"/>
    </ligand>
</feature>
<feature type="binding site" evidence="1">
    <location>
        <position position="494"/>
    </location>
    <ligand>
        <name>L-aspartate</name>
        <dbReference type="ChEBI" id="CHEBI:29991"/>
    </ligand>
</feature>
<feature type="binding site" evidence="1">
    <location>
        <begin position="539"/>
        <end position="542"/>
    </location>
    <ligand>
        <name>ATP</name>
        <dbReference type="ChEBI" id="CHEBI:30616"/>
    </ligand>
</feature>
<gene>
    <name evidence="1" type="primary">aspS</name>
    <name type="ordered locus">CLI_3113</name>
</gene>
<keyword id="KW-0030">Aminoacyl-tRNA synthetase</keyword>
<keyword id="KW-0067">ATP-binding</keyword>
<keyword id="KW-0963">Cytoplasm</keyword>
<keyword id="KW-0436">Ligase</keyword>
<keyword id="KW-0547">Nucleotide-binding</keyword>
<keyword id="KW-0648">Protein biosynthesis</keyword>
<organism>
    <name type="scientific">Clostridium botulinum (strain Langeland / NCTC 10281 / Type F)</name>
    <dbReference type="NCBI Taxonomy" id="441772"/>
    <lineage>
        <taxon>Bacteria</taxon>
        <taxon>Bacillati</taxon>
        <taxon>Bacillota</taxon>
        <taxon>Clostridia</taxon>
        <taxon>Eubacteriales</taxon>
        <taxon>Clostridiaceae</taxon>
        <taxon>Clostridium</taxon>
    </lineage>
</organism>
<dbReference type="EC" id="6.1.1.12" evidence="1"/>
<dbReference type="EMBL" id="CP000728">
    <property type="protein sequence ID" value="ABS39554.1"/>
    <property type="molecule type" value="Genomic_DNA"/>
</dbReference>
<dbReference type="RefSeq" id="WP_003403591.1">
    <property type="nucleotide sequence ID" value="NC_009699.1"/>
</dbReference>
<dbReference type="SMR" id="A7GHS2"/>
<dbReference type="KEGG" id="cbf:CLI_3113"/>
<dbReference type="HOGENOM" id="CLU_014330_3_2_9"/>
<dbReference type="Proteomes" id="UP000002410">
    <property type="component" value="Chromosome"/>
</dbReference>
<dbReference type="GO" id="GO:0005737">
    <property type="term" value="C:cytoplasm"/>
    <property type="evidence" value="ECO:0007669"/>
    <property type="project" value="UniProtKB-SubCell"/>
</dbReference>
<dbReference type="GO" id="GO:0004815">
    <property type="term" value="F:aspartate-tRNA ligase activity"/>
    <property type="evidence" value="ECO:0007669"/>
    <property type="project" value="UniProtKB-UniRule"/>
</dbReference>
<dbReference type="GO" id="GO:0005524">
    <property type="term" value="F:ATP binding"/>
    <property type="evidence" value="ECO:0007669"/>
    <property type="project" value="UniProtKB-UniRule"/>
</dbReference>
<dbReference type="GO" id="GO:0140096">
    <property type="term" value="F:catalytic activity, acting on a protein"/>
    <property type="evidence" value="ECO:0007669"/>
    <property type="project" value="UniProtKB-ARBA"/>
</dbReference>
<dbReference type="GO" id="GO:0003676">
    <property type="term" value="F:nucleic acid binding"/>
    <property type="evidence" value="ECO:0007669"/>
    <property type="project" value="InterPro"/>
</dbReference>
<dbReference type="GO" id="GO:0016740">
    <property type="term" value="F:transferase activity"/>
    <property type="evidence" value="ECO:0007669"/>
    <property type="project" value="UniProtKB-ARBA"/>
</dbReference>
<dbReference type="GO" id="GO:0006422">
    <property type="term" value="P:aspartyl-tRNA aminoacylation"/>
    <property type="evidence" value="ECO:0007669"/>
    <property type="project" value="UniProtKB-UniRule"/>
</dbReference>
<dbReference type="CDD" id="cd00777">
    <property type="entry name" value="AspRS_core"/>
    <property type="match status" value="1"/>
</dbReference>
<dbReference type="CDD" id="cd04317">
    <property type="entry name" value="EcAspRS_like_N"/>
    <property type="match status" value="1"/>
</dbReference>
<dbReference type="Gene3D" id="3.30.930.10">
    <property type="entry name" value="Bira Bifunctional Protein, Domain 2"/>
    <property type="match status" value="1"/>
</dbReference>
<dbReference type="Gene3D" id="3.30.1360.30">
    <property type="entry name" value="GAD-like domain"/>
    <property type="match status" value="1"/>
</dbReference>
<dbReference type="Gene3D" id="2.40.50.140">
    <property type="entry name" value="Nucleic acid-binding proteins"/>
    <property type="match status" value="1"/>
</dbReference>
<dbReference type="HAMAP" id="MF_00044">
    <property type="entry name" value="Asp_tRNA_synth_type1"/>
    <property type="match status" value="1"/>
</dbReference>
<dbReference type="InterPro" id="IPR004364">
    <property type="entry name" value="Aa-tRNA-synt_II"/>
</dbReference>
<dbReference type="InterPro" id="IPR006195">
    <property type="entry name" value="aa-tRNA-synth_II"/>
</dbReference>
<dbReference type="InterPro" id="IPR045864">
    <property type="entry name" value="aa-tRNA-synth_II/BPL/LPL"/>
</dbReference>
<dbReference type="InterPro" id="IPR004524">
    <property type="entry name" value="Asp-tRNA-ligase_1"/>
</dbReference>
<dbReference type="InterPro" id="IPR047089">
    <property type="entry name" value="Asp-tRNA-ligase_1_N"/>
</dbReference>
<dbReference type="InterPro" id="IPR002312">
    <property type="entry name" value="Asp/Asn-tRNA-synth_IIb"/>
</dbReference>
<dbReference type="InterPro" id="IPR047090">
    <property type="entry name" value="AspRS_core"/>
</dbReference>
<dbReference type="InterPro" id="IPR004115">
    <property type="entry name" value="GAD-like_sf"/>
</dbReference>
<dbReference type="InterPro" id="IPR029351">
    <property type="entry name" value="GAD_dom"/>
</dbReference>
<dbReference type="InterPro" id="IPR012340">
    <property type="entry name" value="NA-bd_OB-fold"/>
</dbReference>
<dbReference type="InterPro" id="IPR004365">
    <property type="entry name" value="NA-bd_OB_tRNA"/>
</dbReference>
<dbReference type="NCBIfam" id="TIGR00459">
    <property type="entry name" value="aspS_bact"/>
    <property type="match status" value="1"/>
</dbReference>
<dbReference type="NCBIfam" id="NF001750">
    <property type="entry name" value="PRK00476.1"/>
    <property type="match status" value="1"/>
</dbReference>
<dbReference type="PANTHER" id="PTHR22594:SF5">
    <property type="entry name" value="ASPARTATE--TRNA LIGASE, MITOCHONDRIAL"/>
    <property type="match status" value="1"/>
</dbReference>
<dbReference type="PANTHER" id="PTHR22594">
    <property type="entry name" value="ASPARTYL/LYSYL-TRNA SYNTHETASE"/>
    <property type="match status" value="1"/>
</dbReference>
<dbReference type="Pfam" id="PF02938">
    <property type="entry name" value="GAD"/>
    <property type="match status" value="1"/>
</dbReference>
<dbReference type="Pfam" id="PF00152">
    <property type="entry name" value="tRNA-synt_2"/>
    <property type="match status" value="1"/>
</dbReference>
<dbReference type="Pfam" id="PF01336">
    <property type="entry name" value="tRNA_anti-codon"/>
    <property type="match status" value="1"/>
</dbReference>
<dbReference type="PRINTS" id="PR01042">
    <property type="entry name" value="TRNASYNTHASP"/>
</dbReference>
<dbReference type="SUPFAM" id="SSF55681">
    <property type="entry name" value="Class II aaRS and biotin synthetases"/>
    <property type="match status" value="1"/>
</dbReference>
<dbReference type="SUPFAM" id="SSF55261">
    <property type="entry name" value="GAD domain-like"/>
    <property type="match status" value="1"/>
</dbReference>
<dbReference type="SUPFAM" id="SSF50249">
    <property type="entry name" value="Nucleic acid-binding proteins"/>
    <property type="match status" value="1"/>
</dbReference>
<dbReference type="PROSITE" id="PS50862">
    <property type="entry name" value="AA_TRNA_LIGASE_II"/>
    <property type="match status" value="1"/>
</dbReference>
<name>SYD_CLOBL</name>
<sequence>MGEALRGLKRTIMCGESRENNIGEKVTVMGWVQRKRNLGGLIFVDLRDRTGIMQIVFGEEINKEAFEKSDNVKSEYCIAVTGEIVKRQSPNNDMETGAVELKGEDIKILSESETPPIYIKEGLDASENIRLKYRYLDLRRPDMQKIFMIRHKTCKVVRDFLDENGFLEMETPILTKSTPEGARDYLVPSRNYKGMFYALPQSPQIFKQLLMVSGYDKYFQITKCFRDEDLRANRQPEFTQIDMELSFVEEDDVIELNERLLAKVFKEVGGIDVKLPIERMPYKIAMEKYGSDKPDLRFGMEINDLTEAVKNSEFKVFKGAIEAGGSVRAIKAENCATMGRKQIDKLQDFVKTYKAKGLAWIAYKEDEIKSPIAKFLTEEEMKAILEKMDAKAGDLILIVADKNNVVFESLGALRLHIAKELDIINKNEFRFVWITEFPLLAYNEEEGRYQAEHHPFTAIMDEDIELLDTEPGKVRAKAYDIVLNGEELGGGSIRIHDSKLQEKMFSVLGFTKEKAWERFGFLLEAFKFGPPPHGGLAYGLDRMIMFLAGTENIKDVITFPKNQNAFCPLTEAPNVVDENQLEELGIKKIEKED</sequence>
<comment type="function">
    <text evidence="1">Catalyzes the attachment of L-aspartate to tRNA(Asp) in a two-step reaction: L-aspartate is first activated by ATP to form Asp-AMP and then transferred to the acceptor end of tRNA(Asp).</text>
</comment>
<comment type="catalytic activity">
    <reaction evidence="1">
        <text>tRNA(Asp) + L-aspartate + ATP = L-aspartyl-tRNA(Asp) + AMP + diphosphate</text>
        <dbReference type="Rhea" id="RHEA:19649"/>
        <dbReference type="Rhea" id="RHEA-COMP:9660"/>
        <dbReference type="Rhea" id="RHEA-COMP:9678"/>
        <dbReference type="ChEBI" id="CHEBI:29991"/>
        <dbReference type="ChEBI" id="CHEBI:30616"/>
        <dbReference type="ChEBI" id="CHEBI:33019"/>
        <dbReference type="ChEBI" id="CHEBI:78442"/>
        <dbReference type="ChEBI" id="CHEBI:78516"/>
        <dbReference type="ChEBI" id="CHEBI:456215"/>
        <dbReference type="EC" id="6.1.1.12"/>
    </reaction>
</comment>
<comment type="subunit">
    <text evidence="1">Homodimer.</text>
</comment>
<comment type="subcellular location">
    <subcellularLocation>
        <location evidence="1">Cytoplasm</location>
    </subcellularLocation>
</comment>
<comment type="similarity">
    <text evidence="1">Belongs to the class-II aminoacyl-tRNA synthetase family. Type 1 subfamily.</text>
</comment>
<evidence type="ECO:0000255" key="1">
    <source>
        <dbReference type="HAMAP-Rule" id="MF_00044"/>
    </source>
</evidence>
<protein>
    <recommendedName>
        <fullName evidence="1">Aspartate--tRNA ligase</fullName>
        <ecNumber evidence="1">6.1.1.12</ecNumber>
    </recommendedName>
    <alternativeName>
        <fullName evidence="1">Aspartyl-tRNA synthetase</fullName>
        <shortName evidence="1">AspRS</shortName>
    </alternativeName>
</protein>